<gene>
    <name evidence="4" type="primary">KIPK2</name>
    <name evidence="6" type="ordered locus">At2g36350</name>
    <name evidence="7" type="ORF">F2H17.4</name>
</gene>
<keyword id="KW-0067">ATP-binding</keyword>
<keyword id="KW-0418">Kinase</keyword>
<keyword id="KW-0547">Nucleotide-binding</keyword>
<keyword id="KW-1185">Reference proteome</keyword>
<keyword id="KW-0723">Serine/threonine-protein kinase</keyword>
<keyword id="KW-0808">Transferase</keyword>
<feature type="chain" id="PRO_0000438055" description="Serine/threonine-protein kinase KIPK2">
    <location>
        <begin position="1"/>
        <end position="949"/>
    </location>
</feature>
<feature type="domain" description="Protein kinase" evidence="1">
    <location>
        <begin position="559"/>
        <end position="898"/>
    </location>
</feature>
<feature type="region of interest" description="Disordered" evidence="2">
    <location>
        <begin position="79"/>
        <end position="116"/>
    </location>
</feature>
<feature type="region of interest" description="Disordered" evidence="2">
    <location>
        <begin position="323"/>
        <end position="344"/>
    </location>
</feature>
<feature type="region of interest" description="Disordered" evidence="2">
    <location>
        <begin position="407"/>
        <end position="426"/>
    </location>
</feature>
<feature type="region of interest" description="Disordered" evidence="2">
    <location>
        <begin position="495"/>
        <end position="525"/>
    </location>
</feature>
<feature type="compositionally biased region" description="Low complexity" evidence="2">
    <location>
        <begin position="81"/>
        <end position="94"/>
    </location>
</feature>
<feature type="compositionally biased region" description="Polar residues" evidence="2">
    <location>
        <begin position="407"/>
        <end position="420"/>
    </location>
</feature>
<feature type="compositionally biased region" description="Polar residues" evidence="2">
    <location>
        <begin position="495"/>
        <end position="512"/>
    </location>
</feature>
<feature type="compositionally biased region" description="Low complexity" evidence="2">
    <location>
        <begin position="513"/>
        <end position="525"/>
    </location>
</feature>
<feature type="active site" description="Proton acceptor" evidence="1">
    <location>
        <position position="684"/>
    </location>
</feature>
<feature type="binding site" evidence="1">
    <location>
        <begin position="565"/>
        <end position="573"/>
    </location>
    <ligand>
        <name>ATP</name>
        <dbReference type="ChEBI" id="CHEBI:30616"/>
    </ligand>
</feature>
<feature type="binding site" evidence="1">
    <location>
        <position position="588"/>
    </location>
    <ligand>
        <name>ATP</name>
        <dbReference type="ChEBI" id="CHEBI:30616"/>
    </ligand>
</feature>
<organism>
    <name type="scientific">Arabidopsis thaliana</name>
    <name type="common">Mouse-ear cress</name>
    <dbReference type="NCBI Taxonomy" id="3702"/>
    <lineage>
        <taxon>Eukaryota</taxon>
        <taxon>Viridiplantae</taxon>
        <taxon>Streptophyta</taxon>
        <taxon>Embryophyta</taxon>
        <taxon>Tracheophyta</taxon>
        <taxon>Spermatophyta</taxon>
        <taxon>Magnoliopsida</taxon>
        <taxon>eudicotyledons</taxon>
        <taxon>Gunneridae</taxon>
        <taxon>Pentapetalae</taxon>
        <taxon>rosids</taxon>
        <taxon>malvids</taxon>
        <taxon>Brassicales</taxon>
        <taxon>Brassicaceae</taxon>
        <taxon>Camelineae</taxon>
        <taxon>Arabidopsis</taxon>
    </lineage>
</organism>
<proteinExistence type="evidence at protein level"/>
<comment type="function">
    <text evidence="3">Serine/threonine-protein kinase that could be involved in the negative regulation of root growth.</text>
</comment>
<comment type="catalytic activity">
    <reaction>
        <text>L-seryl-[protein] + ATP = O-phospho-L-seryl-[protein] + ADP + H(+)</text>
        <dbReference type="Rhea" id="RHEA:17989"/>
        <dbReference type="Rhea" id="RHEA-COMP:9863"/>
        <dbReference type="Rhea" id="RHEA-COMP:11604"/>
        <dbReference type="ChEBI" id="CHEBI:15378"/>
        <dbReference type="ChEBI" id="CHEBI:29999"/>
        <dbReference type="ChEBI" id="CHEBI:30616"/>
        <dbReference type="ChEBI" id="CHEBI:83421"/>
        <dbReference type="ChEBI" id="CHEBI:456216"/>
        <dbReference type="EC" id="2.7.11.1"/>
    </reaction>
</comment>
<comment type="catalytic activity">
    <reaction>
        <text>L-threonyl-[protein] + ATP = O-phospho-L-threonyl-[protein] + ADP + H(+)</text>
        <dbReference type="Rhea" id="RHEA:46608"/>
        <dbReference type="Rhea" id="RHEA-COMP:11060"/>
        <dbReference type="Rhea" id="RHEA-COMP:11605"/>
        <dbReference type="ChEBI" id="CHEBI:15378"/>
        <dbReference type="ChEBI" id="CHEBI:30013"/>
        <dbReference type="ChEBI" id="CHEBI:30616"/>
        <dbReference type="ChEBI" id="CHEBI:61977"/>
        <dbReference type="ChEBI" id="CHEBI:456216"/>
        <dbReference type="EC" id="2.7.11.1"/>
    </reaction>
</comment>
<comment type="subunit">
    <text evidence="3">Interacts with KCBP, PERK8, PERK9, PERK10 and PERK13.</text>
</comment>
<comment type="interaction">
    <interactant intactId="EBI-1103882">
        <id>Q9SJM3</id>
    </interactant>
    <interactant intactId="EBI-1103587">
        <id>Q9XF67</id>
        <label>PDPK1</label>
    </interactant>
    <organismsDiffer>false</organismsDiffer>
    <experiments>2</experiments>
</comment>
<comment type="similarity">
    <text evidence="1">Belongs to the protein kinase superfamily. Ser/Thr protein kinase family.</text>
</comment>
<name>KIPK2_ARATH</name>
<reference key="1">
    <citation type="journal article" date="1999" name="Nature">
        <title>Sequence and analysis of chromosome 2 of the plant Arabidopsis thaliana.</title>
        <authorList>
            <person name="Lin X."/>
            <person name="Kaul S."/>
            <person name="Rounsley S.D."/>
            <person name="Shea T.P."/>
            <person name="Benito M.-I."/>
            <person name="Town C.D."/>
            <person name="Fujii C.Y."/>
            <person name="Mason T.M."/>
            <person name="Bowman C.L."/>
            <person name="Barnstead M.E."/>
            <person name="Feldblyum T.V."/>
            <person name="Buell C.R."/>
            <person name="Ketchum K.A."/>
            <person name="Lee J.J."/>
            <person name="Ronning C.M."/>
            <person name="Koo H.L."/>
            <person name="Moffat K.S."/>
            <person name="Cronin L.A."/>
            <person name="Shen M."/>
            <person name="Pai G."/>
            <person name="Van Aken S."/>
            <person name="Umayam L."/>
            <person name="Tallon L.J."/>
            <person name="Gill J.E."/>
            <person name="Adams M.D."/>
            <person name="Carrera A.J."/>
            <person name="Creasy T.H."/>
            <person name="Goodman H.M."/>
            <person name="Somerville C.R."/>
            <person name="Copenhaver G.P."/>
            <person name="Preuss D."/>
            <person name="Nierman W.C."/>
            <person name="White O."/>
            <person name="Eisen J.A."/>
            <person name="Salzberg S.L."/>
            <person name="Fraser C.M."/>
            <person name="Venter J.C."/>
        </authorList>
    </citation>
    <scope>NUCLEOTIDE SEQUENCE [LARGE SCALE GENOMIC DNA]</scope>
    <source>
        <strain>cv. Columbia</strain>
    </source>
</reference>
<reference key="2">
    <citation type="journal article" date="2017" name="Plant J.">
        <title>Araport11: a complete reannotation of the Arabidopsis thaliana reference genome.</title>
        <authorList>
            <person name="Cheng C.Y."/>
            <person name="Krishnakumar V."/>
            <person name="Chan A.P."/>
            <person name="Thibaud-Nissen F."/>
            <person name="Schobel S."/>
            <person name="Town C.D."/>
        </authorList>
    </citation>
    <scope>GENOME REANNOTATION</scope>
    <source>
        <strain>cv. Columbia</strain>
    </source>
</reference>
<reference key="3">
    <citation type="journal article" date="2015" name="J. Exp. Bot.">
        <title>PERK-KIPK-KCBP signalling negatively regulates root growth in Arabidopsis thaliana.</title>
        <authorList>
            <person name="Humphrey T.V."/>
            <person name="Haasen K.E."/>
            <person name="Aldea-Brydges M.G."/>
            <person name="Sun H."/>
            <person name="Zayed Y."/>
            <person name="Indriolo E."/>
            <person name="Goring D.R."/>
        </authorList>
    </citation>
    <scope>INTERACTION WITH KCBP; PERK8; PERK9; PERK10 AND PERK13</scope>
    <scope>FUNCTION</scope>
</reference>
<accession>Q9SJM3</accession>
<dbReference type="EC" id="2.7.11.1" evidence="1"/>
<dbReference type="EMBL" id="AC006921">
    <property type="protein sequence ID" value="AAD21431.1"/>
    <property type="molecule type" value="Genomic_DNA"/>
</dbReference>
<dbReference type="EMBL" id="CP002685">
    <property type="protein sequence ID" value="AEC09236.1"/>
    <property type="molecule type" value="Genomic_DNA"/>
</dbReference>
<dbReference type="PIR" id="F84779">
    <property type="entry name" value="F84779"/>
</dbReference>
<dbReference type="RefSeq" id="NP_181176.1">
    <property type="nucleotide sequence ID" value="NM_129192.4"/>
</dbReference>
<dbReference type="SMR" id="Q9SJM3"/>
<dbReference type="FunCoup" id="Q9SJM3">
    <property type="interactions" value="69"/>
</dbReference>
<dbReference type="IntAct" id="Q9SJM3">
    <property type="interactions" value="6"/>
</dbReference>
<dbReference type="STRING" id="3702.Q9SJM3"/>
<dbReference type="iPTMnet" id="Q9SJM3"/>
<dbReference type="PaxDb" id="3702-AT2G36350.1"/>
<dbReference type="ProteomicsDB" id="238220"/>
<dbReference type="EnsemblPlants" id="AT2G36350.1">
    <property type="protein sequence ID" value="AT2G36350.1"/>
    <property type="gene ID" value="AT2G36350"/>
</dbReference>
<dbReference type="GeneID" id="818208"/>
<dbReference type="Gramene" id="AT2G36350.1">
    <property type="protein sequence ID" value="AT2G36350.1"/>
    <property type="gene ID" value="AT2G36350"/>
</dbReference>
<dbReference type="KEGG" id="ath:AT2G36350"/>
<dbReference type="Araport" id="AT2G36350"/>
<dbReference type="TAIR" id="AT2G36350">
    <property type="gene designation" value="AGC1-9"/>
</dbReference>
<dbReference type="eggNOG" id="KOG0610">
    <property type="taxonomic scope" value="Eukaryota"/>
</dbReference>
<dbReference type="HOGENOM" id="CLU_000288_39_0_1"/>
<dbReference type="InParanoid" id="Q9SJM3"/>
<dbReference type="OMA" id="RIDEGNQ"/>
<dbReference type="PhylomeDB" id="Q9SJM3"/>
<dbReference type="PRO" id="PR:Q9SJM3"/>
<dbReference type="Proteomes" id="UP000006548">
    <property type="component" value="Chromosome 2"/>
</dbReference>
<dbReference type="ExpressionAtlas" id="Q9SJM3">
    <property type="expression patterns" value="baseline and differential"/>
</dbReference>
<dbReference type="GO" id="GO:0005524">
    <property type="term" value="F:ATP binding"/>
    <property type="evidence" value="ECO:0007669"/>
    <property type="project" value="UniProtKB-KW"/>
</dbReference>
<dbReference type="GO" id="GO:0016301">
    <property type="term" value="F:kinase activity"/>
    <property type="evidence" value="ECO:0000250"/>
    <property type="project" value="TAIR"/>
</dbReference>
<dbReference type="GO" id="GO:0019901">
    <property type="term" value="F:protein kinase binding"/>
    <property type="evidence" value="ECO:0000353"/>
    <property type="project" value="UniProtKB"/>
</dbReference>
<dbReference type="GO" id="GO:0106310">
    <property type="term" value="F:protein serine kinase activity"/>
    <property type="evidence" value="ECO:0007669"/>
    <property type="project" value="RHEA"/>
</dbReference>
<dbReference type="GO" id="GO:0004674">
    <property type="term" value="F:protein serine/threonine kinase activity"/>
    <property type="evidence" value="ECO:0007669"/>
    <property type="project" value="UniProtKB-KW"/>
</dbReference>
<dbReference type="CDD" id="cd05574">
    <property type="entry name" value="STKc_phototropin_like"/>
    <property type="match status" value="1"/>
</dbReference>
<dbReference type="FunFam" id="3.30.200.20:FF:000032">
    <property type="entry name" value="Serine/threonine-protein kinase D6PK-like"/>
    <property type="match status" value="1"/>
</dbReference>
<dbReference type="FunFam" id="1.10.510.10:FF:000020">
    <property type="entry name" value="serine/threonine-protein kinase D6PK-like"/>
    <property type="match status" value="1"/>
</dbReference>
<dbReference type="FunFam" id="1.10.510.10:FF:000028">
    <property type="entry name" value="serine/threonine-protein kinase D6PK-like"/>
    <property type="match status" value="1"/>
</dbReference>
<dbReference type="Gene3D" id="3.30.200.20">
    <property type="entry name" value="Phosphorylase Kinase, domain 1"/>
    <property type="match status" value="1"/>
</dbReference>
<dbReference type="Gene3D" id="1.10.510.10">
    <property type="entry name" value="Transferase(Phosphotransferase) domain 1"/>
    <property type="match status" value="1"/>
</dbReference>
<dbReference type="InterPro" id="IPR011009">
    <property type="entry name" value="Kinase-like_dom_sf"/>
</dbReference>
<dbReference type="InterPro" id="IPR000719">
    <property type="entry name" value="Prot_kinase_dom"/>
</dbReference>
<dbReference type="InterPro" id="IPR008271">
    <property type="entry name" value="Ser/Thr_kinase_AS"/>
</dbReference>
<dbReference type="PANTHER" id="PTHR45637">
    <property type="entry name" value="FLIPPASE KINASE 1-RELATED"/>
    <property type="match status" value="1"/>
</dbReference>
<dbReference type="Pfam" id="PF00069">
    <property type="entry name" value="Pkinase"/>
    <property type="match status" value="2"/>
</dbReference>
<dbReference type="SMART" id="SM00220">
    <property type="entry name" value="S_TKc"/>
    <property type="match status" value="1"/>
</dbReference>
<dbReference type="SUPFAM" id="SSF56112">
    <property type="entry name" value="Protein kinase-like (PK-like)"/>
    <property type="match status" value="1"/>
</dbReference>
<dbReference type="PROSITE" id="PS50011">
    <property type="entry name" value="PROTEIN_KINASE_DOM"/>
    <property type="match status" value="1"/>
</dbReference>
<dbReference type="PROSITE" id="PS00108">
    <property type="entry name" value="PROTEIN_KINASE_ST"/>
    <property type="match status" value="1"/>
</dbReference>
<sequence length="949" mass="104521">MESFAGSCEIVEEKDAVRLAKHSSRYCMSPLGSSKDMEQRPALKSGYQGSMEYDIDQLFQSITIKPSPRRVMGSSFHHLETSASAGTSRSTSPSNKGAMKKPFPMGTPRSPRVGPSDSISLKQALRDLCISKASEMASQKRLSKSAAASPRVSEADRIKTLYRQVLNESAGKPGLPVDKGKSLVEISLTPVVDIPSSSQSVPQRYDVLETEPSNFISEPSQAEILLHVLGNGSGIKTVGYGMLETVSLCKSNKSGSCLSSGSGDYEIEIDENHTSPPHMVIEDQLVEIDKHVTSLPSCSGSKVDTEELDKSIVSSARVKSEPTALSSGLKGKLDNFPGSGTEKSKLVSKVTRNIPRPKPRPKKKILLKKKLKIVVNSATKMVEEVDTSLEPSASQLLCQKCHCAVKSTSTENHPPSNTSHTTDKNVSIEADQESLASPRLIRIVKCNKEASKGSSDSCEVSDSGEAVIVMKQEVSPSNYSGKGDADEQIRANPTSSEKFDFSLSSKNSLGDYSSSTSMSEESNLSRFSCGNKPHMSMDVRWEAVKHVKLQYGSLGLRHFNLLKKLGCGDIGTVYLAELVGTNCLFAIKVMDNEFLARRKKTPRAQAERAILKMLDHPFLPTLYAQFTSDNLSCLVMEYCPGGDLHVLRQKQLSRCFSEPATRFYVAEILLALEYLHMLGVIYRDLKPENILVREDGHIMLTDFDLSLRCAVNPTLLRSTSPPEKDPARMSGPYSTSNCIQPLCIEPSCRVPCFSPRLLSTQARNQKPRKPKRPDLLTQQFRSLPQLVAEPTEARSNSFVGTHEYLAPEIIKGEGHGAAVDWWTFGVLLYELLYGKTPFKGYDNEETLSNVVYQNLKFPDSPLVSFQAKELIRRLLVKDPESRLGSEKGAAEIKRHPFFEGLNWALIRCAIPPELPDIYDNGATEATSPEGNNRYLECKAIGDHLEFELF</sequence>
<evidence type="ECO:0000255" key="1">
    <source>
        <dbReference type="PROSITE-ProRule" id="PRU00159"/>
    </source>
</evidence>
<evidence type="ECO:0000256" key="2">
    <source>
        <dbReference type="SAM" id="MobiDB-lite"/>
    </source>
</evidence>
<evidence type="ECO:0000269" key="3">
    <source>
    </source>
</evidence>
<evidence type="ECO:0000303" key="4">
    <source>
    </source>
</evidence>
<evidence type="ECO:0000305" key="5"/>
<evidence type="ECO:0000312" key="6">
    <source>
        <dbReference type="Araport" id="AT2G36350"/>
    </source>
</evidence>
<evidence type="ECO:0000312" key="7">
    <source>
        <dbReference type="EMBL" id="AAD21431.1"/>
    </source>
</evidence>
<protein>
    <recommendedName>
        <fullName evidence="5">Serine/threonine-protein kinase KIPK2</fullName>
        <ecNumber evidence="1">2.7.11.1</ecNumber>
    </recommendedName>
</protein>